<dbReference type="EMBL" id="AL023094">
    <property type="protein sequence ID" value="CAA18822.1"/>
    <property type="status" value="ALT_INIT"/>
    <property type="molecule type" value="Genomic_DNA"/>
</dbReference>
<dbReference type="EMBL" id="AL035521">
    <property type="protein sequence ID" value="CAB36720.1"/>
    <property type="status" value="ALT_SEQ"/>
    <property type="molecule type" value="Genomic_DNA"/>
</dbReference>
<dbReference type="EMBL" id="AL161585">
    <property type="protein sequence ID" value="CAB80160.1"/>
    <property type="status" value="ALT_SEQ"/>
    <property type="molecule type" value="Genomic_DNA"/>
</dbReference>
<dbReference type="EMBL" id="CP002687">
    <property type="protein sequence ID" value="AEE86373.1"/>
    <property type="molecule type" value="Genomic_DNA"/>
</dbReference>
<dbReference type="EMBL" id="CP002687">
    <property type="protein sequence ID" value="AEE86374.1"/>
    <property type="molecule type" value="Genomic_DNA"/>
</dbReference>
<dbReference type="EMBL" id="CP002687">
    <property type="protein sequence ID" value="AEE86375.1"/>
    <property type="molecule type" value="Genomic_DNA"/>
</dbReference>
<dbReference type="EMBL" id="CP002687">
    <property type="protein sequence ID" value="AEE86376.1"/>
    <property type="molecule type" value="Genomic_DNA"/>
</dbReference>
<dbReference type="EMBL" id="AK117284">
    <property type="protein sequence ID" value="BAC41956.1"/>
    <property type="molecule type" value="mRNA"/>
</dbReference>
<dbReference type="EMBL" id="AY074306">
    <property type="protein sequence ID" value="AAL67003.1"/>
    <property type="molecule type" value="mRNA"/>
</dbReference>
<dbReference type="EMBL" id="AY096454">
    <property type="protein sequence ID" value="AAM20094.1"/>
    <property type="molecule type" value="mRNA"/>
</dbReference>
<dbReference type="PIR" id="T04789">
    <property type="entry name" value="T04789"/>
</dbReference>
<dbReference type="PIR" id="T05263">
    <property type="entry name" value="T05263"/>
</dbReference>
<dbReference type="RefSeq" id="NP_195169.3">
    <molecule id="Q8VY05-2"/>
    <property type="nucleotide sequence ID" value="NM_119608.3"/>
</dbReference>
<dbReference type="RefSeq" id="NP_849563.1">
    <molecule id="Q8VY05-1"/>
    <property type="nucleotide sequence ID" value="NM_179232.1"/>
</dbReference>
<dbReference type="RefSeq" id="NP_849564.1">
    <molecule id="Q8VY05-1"/>
    <property type="nucleotide sequence ID" value="NM_179233.2"/>
</dbReference>
<dbReference type="RefSeq" id="NP_974682.1">
    <molecule id="Q8VY05-3"/>
    <property type="nucleotide sequence ID" value="NM_202953.1"/>
</dbReference>
<dbReference type="SMR" id="Q8VY05"/>
<dbReference type="BioGRID" id="14876">
    <property type="interactions" value="29"/>
</dbReference>
<dbReference type="ComplexPortal" id="CPX-7726">
    <property type="entry name" value="SYD-associated SWI/SNF ATP-dependent chromatin remodeling complex"/>
</dbReference>
<dbReference type="FunCoup" id="Q8VY05">
    <property type="interactions" value="3996"/>
</dbReference>
<dbReference type="IntAct" id="Q8VY05">
    <property type="interactions" value="5"/>
</dbReference>
<dbReference type="STRING" id="3702.Q8VY05"/>
<dbReference type="GlyGen" id="Q8VY05">
    <property type="glycosylation" value="1 site"/>
</dbReference>
<dbReference type="iPTMnet" id="Q8VY05"/>
<dbReference type="PaxDb" id="3702-AT4G34430.4"/>
<dbReference type="ProteomicsDB" id="226538">
    <molecule id="Q8VY05-1"/>
</dbReference>
<dbReference type="EnsemblPlants" id="AT4G34430.1">
    <molecule id="Q8VY05-1"/>
    <property type="protein sequence ID" value="AT4G34430.1"/>
    <property type="gene ID" value="AT4G34430"/>
</dbReference>
<dbReference type="EnsemblPlants" id="AT4G34430.2">
    <molecule id="Q8VY05-1"/>
    <property type="protein sequence ID" value="AT4G34430.2"/>
    <property type="gene ID" value="AT4G34430"/>
</dbReference>
<dbReference type="EnsemblPlants" id="AT4G34430.3">
    <molecule id="Q8VY05-2"/>
    <property type="protein sequence ID" value="AT4G34430.3"/>
    <property type="gene ID" value="AT4G34430"/>
</dbReference>
<dbReference type="EnsemblPlants" id="AT4G34430.4">
    <molecule id="Q8VY05-3"/>
    <property type="protein sequence ID" value="AT4G34430.4"/>
    <property type="gene ID" value="AT4G34430"/>
</dbReference>
<dbReference type="GeneID" id="829594"/>
<dbReference type="Gramene" id="AT4G34430.1">
    <molecule id="Q8VY05-1"/>
    <property type="protein sequence ID" value="AT4G34430.1"/>
    <property type="gene ID" value="AT4G34430"/>
</dbReference>
<dbReference type="Gramene" id="AT4G34430.2">
    <molecule id="Q8VY05-1"/>
    <property type="protein sequence ID" value="AT4G34430.2"/>
    <property type="gene ID" value="AT4G34430"/>
</dbReference>
<dbReference type="Gramene" id="AT4G34430.3">
    <molecule id="Q8VY05-2"/>
    <property type="protein sequence ID" value="AT4G34430.3"/>
    <property type="gene ID" value="AT4G34430"/>
</dbReference>
<dbReference type="Gramene" id="AT4G34430.4">
    <molecule id="Q8VY05-3"/>
    <property type="protein sequence ID" value="AT4G34430.4"/>
    <property type="gene ID" value="AT4G34430"/>
</dbReference>
<dbReference type="KEGG" id="ath:AT4G34430"/>
<dbReference type="Araport" id="AT4G34430"/>
<dbReference type="TAIR" id="AT4G34430">
    <property type="gene designation" value="CHB3"/>
</dbReference>
<dbReference type="eggNOG" id="KOG1279">
    <property type="taxonomic scope" value="Eukaryota"/>
</dbReference>
<dbReference type="InParanoid" id="Q8VY05"/>
<dbReference type="OMA" id="DFIVMEP"/>
<dbReference type="OrthoDB" id="118550at2759"/>
<dbReference type="PhylomeDB" id="Q8VY05"/>
<dbReference type="CD-CODE" id="4299E36E">
    <property type="entry name" value="Nucleolus"/>
</dbReference>
<dbReference type="PRO" id="PR:Q8VY05"/>
<dbReference type="Proteomes" id="UP000006548">
    <property type="component" value="Chromosome 4"/>
</dbReference>
<dbReference type="ExpressionAtlas" id="Q8VY05">
    <property type="expression patterns" value="baseline and differential"/>
</dbReference>
<dbReference type="GO" id="GO:0005634">
    <property type="term" value="C:nucleus"/>
    <property type="evidence" value="ECO:0007669"/>
    <property type="project" value="UniProtKB-SubCell"/>
</dbReference>
<dbReference type="GO" id="GO:0003677">
    <property type="term" value="F:DNA binding"/>
    <property type="evidence" value="ECO:0007669"/>
    <property type="project" value="UniProtKB-KW"/>
</dbReference>
<dbReference type="GO" id="GO:0008270">
    <property type="term" value="F:zinc ion binding"/>
    <property type="evidence" value="ECO:0007669"/>
    <property type="project" value="UniProtKB-KW"/>
</dbReference>
<dbReference type="GO" id="GO:0006325">
    <property type="term" value="P:chromatin organization"/>
    <property type="evidence" value="ECO:0007669"/>
    <property type="project" value="UniProtKB-KW"/>
</dbReference>
<dbReference type="GO" id="GO:0060255">
    <property type="term" value="P:regulation of macromolecule metabolic process"/>
    <property type="evidence" value="ECO:0007669"/>
    <property type="project" value="UniProtKB-ARBA"/>
</dbReference>
<dbReference type="GO" id="GO:0080090">
    <property type="term" value="P:regulation of primary metabolic process"/>
    <property type="evidence" value="ECO:0007669"/>
    <property type="project" value="UniProtKB-ARBA"/>
</dbReference>
<dbReference type="CDD" id="cd00167">
    <property type="entry name" value="SANT"/>
    <property type="match status" value="1"/>
</dbReference>
<dbReference type="CDD" id="cd02336">
    <property type="entry name" value="ZZ_RSC8"/>
    <property type="match status" value="1"/>
</dbReference>
<dbReference type="FunFam" id="1.10.10.60:FF:000014">
    <property type="entry name" value="SWI/SNF complex subunit SMARCC2 isoform C"/>
    <property type="match status" value="1"/>
</dbReference>
<dbReference type="Gene3D" id="3.30.60.90">
    <property type="match status" value="1"/>
</dbReference>
<dbReference type="Gene3D" id="1.10.10.60">
    <property type="entry name" value="Homeodomain-like"/>
    <property type="match status" value="1"/>
</dbReference>
<dbReference type="Gene3D" id="1.10.10.10">
    <property type="entry name" value="Winged helix-like DNA-binding domain superfamily/Winged helix DNA-binding domain"/>
    <property type="match status" value="1"/>
</dbReference>
<dbReference type="InterPro" id="IPR009057">
    <property type="entry name" value="Homeodomain-like_sf"/>
</dbReference>
<dbReference type="InterPro" id="IPR017930">
    <property type="entry name" value="Myb_dom"/>
</dbReference>
<dbReference type="InterPro" id="IPR041984">
    <property type="entry name" value="Rsc8/Ssr1/Ssr2_ZZ"/>
</dbReference>
<dbReference type="InterPro" id="IPR001005">
    <property type="entry name" value="SANT/Myb"/>
</dbReference>
<dbReference type="InterPro" id="IPR017884">
    <property type="entry name" value="SANT_dom"/>
</dbReference>
<dbReference type="InterPro" id="IPR032451">
    <property type="entry name" value="SMARCC_C"/>
</dbReference>
<dbReference type="InterPro" id="IPR007526">
    <property type="entry name" value="SWIRM"/>
</dbReference>
<dbReference type="InterPro" id="IPR036388">
    <property type="entry name" value="WH-like_DNA-bd_sf"/>
</dbReference>
<dbReference type="InterPro" id="IPR000433">
    <property type="entry name" value="Znf_ZZ"/>
</dbReference>
<dbReference type="InterPro" id="IPR043145">
    <property type="entry name" value="Znf_ZZ_sf"/>
</dbReference>
<dbReference type="PANTHER" id="PTHR12802:SF41">
    <property type="entry name" value="BRAHMA ASSOCIATED PROTEIN 155 KDA"/>
    <property type="match status" value="1"/>
</dbReference>
<dbReference type="PANTHER" id="PTHR12802">
    <property type="entry name" value="SWI/SNF COMPLEX-RELATED"/>
    <property type="match status" value="1"/>
</dbReference>
<dbReference type="Pfam" id="PF00249">
    <property type="entry name" value="Myb_DNA-binding"/>
    <property type="match status" value="1"/>
</dbReference>
<dbReference type="Pfam" id="PF04433">
    <property type="entry name" value="SWIRM"/>
    <property type="match status" value="1"/>
</dbReference>
<dbReference type="Pfam" id="PF16495">
    <property type="entry name" value="SWIRM-assoc_1"/>
    <property type="match status" value="1"/>
</dbReference>
<dbReference type="Pfam" id="PF00569">
    <property type="entry name" value="ZZ"/>
    <property type="match status" value="1"/>
</dbReference>
<dbReference type="SMART" id="SM00717">
    <property type="entry name" value="SANT"/>
    <property type="match status" value="1"/>
</dbReference>
<dbReference type="SMART" id="SM00291">
    <property type="entry name" value="ZnF_ZZ"/>
    <property type="match status" value="1"/>
</dbReference>
<dbReference type="SUPFAM" id="SSF46689">
    <property type="entry name" value="Homeodomain-like"/>
    <property type="match status" value="2"/>
</dbReference>
<dbReference type="SUPFAM" id="SSF57850">
    <property type="entry name" value="RING/U-box"/>
    <property type="match status" value="1"/>
</dbReference>
<dbReference type="PROSITE" id="PS51293">
    <property type="entry name" value="SANT"/>
    <property type="match status" value="1"/>
</dbReference>
<dbReference type="PROSITE" id="PS50934">
    <property type="entry name" value="SWIRM"/>
    <property type="match status" value="1"/>
</dbReference>
<dbReference type="PROSITE" id="PS01357">
    <property type="entry name" value="ZF_ZZ_1"/>
    <property type="match status" value="1"/>
</dbReference>
<dbReference type="PROSITE" id="PS50135">
    <property type="entry name" value="ZF_ZZ_2"/>
    <property type="match status" value="1"/>
</dbReference>
<comment type="function">
    <text>Component of a multiprotein complex equivalent of the SWI/SNF complex, an ATP-dependent chromatin-remodeling complex, which is required for the positive and negative regulation of gene expression of a large number of genes. It changes chromatin structure by altering DNA-histone contacts within a nucleosome, leading eventually to a change in nucleosome position, thus facilitating or repressing binding of gene-specific transcription factors.</text>
</comment>
<comment type="subunit">
    <text evidence="7 8 9">Interacts with SWI3B, but not with BSH. Component of a RNA-directed DNA methylation (RdDM) complex that contains at least MORC6, MORC1/CRT1, MORC2, SWI3D and SUVH9 (PubMed:24465213). Interacts with MORC6 and SUVH9 (PubMed:27171427).</text>
</comment>
<comment type="subcellular location">
    <subcellularLocation>
        <location evidence="4">Nucleus</location>
    </subcellularLocation>
</comment>
<comment type="alternative products">
    <event type="alternative splicing"/>
    <isoform>
        <id>Q8VY05-1</id>
        <name>1</name>
        <sequence type="displayed"/>
    </isoform>
    <isoform>
        <id>Q8VY05-2</id>
        <name>2</name>
        <sequence type="described" ref="VSP_012493"/>
    </isoform>
    <isoform>
        <id>Q8VY05-3</id>
        <name>3</name>
        <sequence type="described" ref="VSP_034846"/>
    </isoform>
</comment>
<comment type="tissue specificity">
    <text evidence="6">Ubiquitously expressed.</text>
</comment>
<comment type="disruption phenotype">
    <text evidence="7">Plants are viable but have alterations in leaf, root and flower development, and are early flowering.</text>
</comment>
<comment type="caution">
    <text evidence="11">Was originally incorrectly assigned as CHB4.</text>
</comment>
<comment type="sequence caution" evidence="11">
    <conflict type="erroneous initiation">
        <sequence resource="EMBL-CDS" id="CAA18822"/>
    </conflict>
    <text>Truncated N-terminus.</text>
</comment>
<comment type="sequence caution" evidence="11">
    <conflict type="erroneous gene model prediction">
        <sequence resource="EMBL-CDS" id="CAB36720"/>
    </conflict>
</comment>
<comment type="sequence caution" evidence="11">
    <conflict type="erroneous gene model prediction">
        <sequence resource="EMBL-CDS" id="CAB80160"/>
    </conflict>
</comment>
<sequence length="985" mass="107797">MEEKRRDSAGTLAFAGSSGDSPASEPMPAPRRRGGGLKRKANALGGSNFFSSAPSKRMLTREKAMLASFSPVHNGPLTRARQAPSIMPSAADGVKSEVLNVAVGADGEKPKEEEERNKAIREWEALEAKIEADFEAIRSRDSNVHVVPNHCGWFSWEKIHPLEERSLPSFFNGKLEGRTSEVYREIRNWIMGKFHSNPNIQIELKDLTELEVGDSEAKQEVMEFLDYWGLINFHPFPPTDTGSTASDHDDLGDKESLLNSLYRFQVDEACPPLVHKPRFTAQATPSGLFPDPMAADELLKQEGPAVEYHCNSCSADCSRKRYHCPKQADFDLCTECFNSGKFSSDMSSSDFILMEPAEAPGVGSGKWTDQETLLLLEALEIFKENWNEIAEHVATKTKAQCMLHFLQMPIEDAFLDQIDYKDPISKDTTDLAVSKDDNSVLKDAPEEAENKKRVDEDETMKEVPEPEDGNEEKVSQESSKPGDASEETNEMEAEQKTPKLETAIEERCKDEADENIALKALTEAFEDVGHSSTPEASFSFADLGNPVMGLAAFLVRLAGSDVATASARASIKSLHSNSGMLLATRHCYILEDPPDNKKDPTKSKSCSADAEGNDDNSHKDDQPEEKSKKAEEVSLNSDDREMPDTDTGKETQDSVSEEKQPGSRTENSTTKLDAVQEKRSSKPVTTDNSEKPVDIICPSQDKCSGKELQEPLKDGNKLSSENKDASQSTVSQSAADASQPEASRDVEMKDTLQSEKDPEDVVKTVGEKVQLAKEEGANDVLSTPDKSVSQQPIGSASAPENGTAGGNPNIEGKKEKDICEGTKDKYNIEKLKRAAISAISAAAVKAKNLAKQEEDQIRQLSGSLIEKQLHKLEAKLSIFNEAESLTMRVREQLERSRQRLYHERAQIIAARLGVPPSMSSKASLPTNRIAANFANVAQRPPMGMAFPRPPMPRPPGFPVPGSFVAATTMTGSSDPSPGSDNVSSV</sequence>
<gene>
    <name type="primary">SWI3D</name>
    <name type="synonym">CHB3</name>
    <name type="ordered locus">At4g34430</name>
    <name type="ORF">F10M10.200</name>
    <name type="ORF">T4L20.10</name>
</gene>
<organism>
    <name type="scientific">Arabidopsis thaliana</name>
    <name type="common">Mouse-ear cress</name>
    <dbReference type="NCBI Taxonomy" id="3702"/>
    <lineage>
        <taxon>Eukaryota</taxon>
        <taxon>Viridiplantae</taxon>
        <taxon>Streptophyta</taxon>
        <taxon>Embryophyta</taxon>
        <taxon>Tracheophyta</taxon>
        <taxon>Spermatophyta</taxon>
        <taxon>Magnoliopsida</taxon>
        <taxon>eudicotyledons</taxon>
        <taxon>Gunneridae</taxon>
        <taxon>Pentapetalae</taxon>
        <taxon>rosids</taxon>
        <taxon>malvids</taxon>
        <taxon>Brassicales</taxon>
        <taxon>Brassicaceae</taxon>
        <taxon>Camelineae</taxon>
        <taxon>Arabidopsis</taxon>
    </lineage>
</organism>
<name>SWI3D_ARATH</name>
<feature type="chain" id="PRO_0000197119" description="SWI/SNF complex subunit SWI3D">
    <location>
        <begin position="1"/>
        <end position="985"/>
    </location>
</feature>
<feature type="domain" description="SWIRM" evidence="3">
    <location>
        <begin position="145"/>
        <end position="242"/>
    </location>
</feature>
<feature type="domain" description="SANT" evidence="4">
    <location>
        <begin position="362"/>
        <end position="413"/>
    </location>
</feature>
<feature type="zinc finger region" description="ZZ-type; degenerate" evidence="2">
    <location>
        <begin position="305"/>
        <end position="359"/>
    </location>
</feature>
<feature type="region of interest" description="Disordered" evidence="5">
    <location>
        <begin position="1"/>
        <end position="55"/>
    </location>
</feature>
<feature type="region of interest" description="Disordered" evidence="5">
    <location>
        <begin position="428"/>
        <end position="502"/>
    </location>
</feature>
<feature type="region of interest" description="Disordered" evidence="5">
    <location>
        <begin position="591"/>
        <end position="814"/>
    </location>
</feature>
<feature type="region of interest" description="Disordered" evidence="5">
    <location>
        <begin position="944"/>
        <end position="985"/>
    </location>
</feature>
<feature type="coiled-coil region" evidence="1">
    <location>
        <begin position="108"/>
        <end position="133"/>
    </location>
</feature>
<feature type="coiled-coil region" evidence="1">
    <location>
        <begin position="839"/>
        <end position="900"/>
    </location>
</feature>
<feature type="compositionally biased region" description="Basic residues" evidence="5">
    <location>
        <begin position="30"/>
        <end position="41"/>
    </location>
</feature>
<feature type="compositionally biased region" description="Basic and acidic residues" evidence="5">
    <location>
        <begin position="428"/>
        <end position="464"/>
    </location>
</feature>
<feature type="compositionally biased region" description="Basic and acidic residues" evidence="5">
    <location>
        <begin position="493"/>
        <end position="502"/>
    </location>
</feature>
<feature type="compositionally biased region" description="Basic and acidic residues" evidence="5">
    <location>
        <begin position="615"/>
        <end position="661"/>
    </location>
</feature>
<feature type="compositionally biased region" description="Polar residues" evidence="5">
    <location>
        <begin position="662"/>
        <end position="671"/>
    </location>
</feature>
<feature type="compositionally biased region" description="Basic and acidic residues" evidence="5">
    <location>
        <begin position="703"/>
        <end position="724"/>
    </location>
</feature>
<feature type="compositionally biased region" description="Polar residues" evidence="5">
    <location>
        <begin position="725"/>
        <end position="736"/>
    </location>
</feature>
<feature type="compositionally biased region" description="Basic and acidic residues" evidence="5">
    <location>
        <begin position="742"/>
        <end position="776"/>
    </location>
</feature>
<feature type="compositionally biased region" description="Polar residues" evidence="5">
    <location>
        <begin position="780"/>
        <end position="800"/>
    </location>
</feature>
<feature type="compositionally biased region" description="Pro residues" evidence="5">
    <location>
        <begin position="947"/>
        <end position="958"/>
    </location>
</feature>
<feature type="compositionally biased region" description="Polar residues" evidence="5">
    <location>
        <begin position="965"/>
        <end position="985"/>
    </location>
</feature>
<feature type="binding site" evidence="2">
    <location>
        <position position="310"/>
    </location>
    <ligand>
        <name>Zn(2+)</name>
        <dbReference type="ChEBI" id="CHEBI:29105"/>
    </ligand>
</feature>
<feature type="binding site" evidence="2">
    <location>
        <position position="313"/>
    </location>
    <ligand>
        <name>Zn(2+)</name>
        <dbReference type="ChEBI" id="CHEBI:29105"/>
    </ligand>
</feature>
<feature type="binding site" evidence="2">
    <location>
        <position position="333"/>
    </location>
    <ligand>
        <name>Zn(2+)</name>
        <dbReference type="ChEBI" id="CHEBI:29105"/>
    </ligand>
</feature>
<feature type="binding site" evidence="2">
    <location>
        <position position="336"/>
    </location>
    <ligand>
        <name>Zn(2+)</name>
        <dbReference type="ChEBI" id="CHEBI:29105"/>
    </ligand>
</feature>
<feature type="splice variant" id="VSP_012493" description="In isoform 2." evidence="10">
    <location>
        <begin position="605"/>
        <end position="606"/>
    </location>
</feature>
<feature type="splice variant" id="VSP_034846" description="In isoform 3." evidence="11">
    <original>K</original>
    <variation>KQ</variation>
    <location>
        <position position="867"/>
    </location>
</feature>
<feature type="sequence conflict" description="In Ref. 3; BAC41956." evidence="11" ref="3">
    <original>E</original>
    <variation>G</variation>
    <location>
        <position position="591"/>
    </location>
</feature>
<evidence type="ECO:0000255" key="1"/>
<evidence type="ECO:0000255" key="2">
    <source>
        <dbReference type="PROSITE-ProRule" id="PRU00228"/>
    </source>
</evidence>
<evidence type="ECO:0000255" key="3">
    <source>
        <dbReference type="PROSITE-ProRule" id="PRU00247"/>
    </source>
</evidence>
<evidence type="ECO:0000255" key="4">
    <source>
        <dbReference type="PROSITE-ProRule" id="PRU00624"/>
    </source>
</evidence>
<evidence type="ECO:0000256" key="5">
    <source>
        <dbReference type="SAM" id="MobiDB-lite"/>
    </source>
</evidence>
<evidence type="ECO:0000269" key="6">
    <source>
    </source>
</evidence>
<evidence type="ECO:0000269" key="7">
    <source>
    </source>
</evidence>
<evidence type="ECO:0000269" key="8">
    <source>
    </source>
</evidence>
<evidence type="ECO:0000269" key="9">
    <source>
    </source>
</evidence>
<evidence type="ECO:0000303" key="10">
    <source>
    </source>
</evidence>
<evidence type="ECO:0000305" key="11"/>
<accession>Q8VY05</accession>
<accession>O65671</accession>
<accession>Q3E9R6</accession>
<accession>Q8GZ04</accession>
<accession>Q9SZ08</accession>
<protein>
    <recommendedName>
        <fullName>SWI/SNF complex subunit SWI3D</fullName>
        <shortName>AtSWI3D</shortName>
    </recommendedName>
    <alternativeName>
        <fullName>Transcription regulatory protein SWI3D</fullName>
    </alternativeName>
</protein>
<keyword id="KW-0010">Activator</keyword>
<keyword id="KW-0025">Alternative splicing</keyword>
<keyword id="KW-0156">Chromatin regulator</keyword>
<keyword id="KW-0175">Coiled coil</keyword>
<keyword id="KW-0217">Developmental protein</keyword>
<keyword id="KW-0238">DNA-binding</keyword>
<keyword id="KW-0479">Metal-binding</keyword>
<keyword id="KW-0539">Nucleus</keyword>
<keyword id="KW-1185">Reference proteome</keyword>
<keyword id="KW-0804">Transcription</keyword>
<keyword id="KW-0805">Transcription regulation</keyword>
<keyword id="KW-0862">Zinc</keyword>
<keyword id="KW-0863">Zinc-finger</keyword>
<proteinExistence type="evidence at protein level"/>
<reference key="1">
    <citation type="journal article" date="1999" name="Nature">
        <title>Sequence and analysis of chromosome 4 of the plant Arabidopsis thaliana.</title>
        <authorList>
            <person name="Mayer K.F.X."/>
            <person name="Schueller C."/>
            <person name="Wambutt R."/>
            <person name="Murphy G."/>
            <person name="Volckaert G."/>
            <person name="Pohl T."/>
            <person name="Duesterhoeft A."/>
            <person name="Stiekema W."/>
            <person name="Entian K.-D."/>
            <person name="Terryn N."/>
            <person name="Harris B."/>
            <person name="Ansorge W."/>
            <person name="Brandt P."/>
            <person name="Grivell L.A."/>
            <person name="Rieger M."/>
            <person name="Weichselgartner M."/>
            <person name="de Simone V."/>
            <person name="Obermaier B."/>
            <person name="Mache R."/>
            <person name="Mueller M."/>
            <person name="Kreis M."/>
            <person name="Delseny M."/>
            <person name="Puigdomenech P."/>
            <person name="Watson M."/>
            <person name="Schmidtheini T."/>
            <person name="Reichert B."/>
            <person name="Portetelle D."/>
            <person name="Perez-Alonso M."/>
            <person name="Boutry M."/>
            <person name="Bancroft I."/>
            <person name="Vos P."/>
            <person name="Hoheisel J."/>
            <person name="Zimmermann W."/>
            <person name="Wedler H."/>
            <person name="Ridley P."/>
            <person name="Langham S.-A."/>
            <person name="McCullagh B."/>
            <person name="Bilham L."/>
            <person name="Robben J."/>
            <person name="van der Schueren J."/>
            <person name="Grymonprez B."/>
            <person name="Chuang Y.-J."/>
            <person name="Vandenbussche F."/>
            <person name="Braeken M."/>
            <person name="Weltjens I."/>
            <person name="Voet M."/>
            <person name="Bastiaens I."/>
            <person name="Aert R."/>
            <person name="Defoor E."/>
            <person name="Weitzenegger T."/>
            <person name="Bothe G."/>
            <person name="Ramsperger U."/>
            <person name="Hilbert H."/>
            <person name="Braun M."/>
            <person name="Holzer E."/>
            <person name="Brandt A."/>
            <person name="Peters S."/>
            <person name="van Staveren M."/>
            <person name="Dirkse W."/>
            <person name="Mooijman P."/>
            <person name="Klein Lankhorst R."/>
            <person name="Rose M."/>
            <person name="Hauf J."/>
            <person name="Koetter P."/>
            <person name="Berneiser S."/>
            <person name="Hempel S."/>
            <person name="Feldpausch M."/>
            <person name="Lamberth S."/>
            <person name="Van den Daele H."/>
            <person name="De Keyser A."/>
            <person name="Buysshaert C."/>
            <person name="Gielen J."/>
            <person name="Villarroel R."/>
            <person name="De Clercq R."/>
            <person name="van Montagu M."/>
            <person name="Rogers J."/>
            <person name="Cronin A."/>
            <person name="Quail M.A."/>
            <person name="Bray-Allen S."/>
            <person name="Clark L."/>
            <person name="Doggett J."/>
            <person name="Hall S."/>
            <person name="Kay M."/>
            <person name="Lennard N."/>
            <person name="McLay K."/>
            <person name="Mayes R."/>
            <person name="Pettett A."/>
            <person name="Rajandream M.A."/>
            <person name="Lyne M."/>
            <person name="Benes V."/>
            <person name="Rechmann S."/>
            <person name="Borkova D."/>
            <person name="Bloecker H."/>
            <person name="Scharfe M."/>
            <person name="Grimm M."/>
            <person name="Loehnert T.-H."/>
            <person name="Dose S."/>
            <person name="de Haan M."/>
            <person name="Maarse A.C."/>
            <person name="Schaefer M."/>
            <person name="Mueller-Auer S."/>
            <person name="Gabel C."/>
            <person name="Fuchs M."/>
            <person name="Fartmann B."/>
            <person name="Granderath K."/>
            <person name="Dauner D."/>
            <person name="Herzl A."/>
            <person name="Neumann S."/>
            <person name="Argiriou A."/>
            <person name="Vitale D."/>
            <person name="Liguori R."/>
            <person name="Piravandi E."/>
            <person name="Massenet O."/>
            <person name="Quigley F."/>
            <person name="Clabauld G."/>
            <person name="Muendlein A."/>
            <person name="Felber R."/>
            <person name="Schnabl S."/>
            <person name="Hiller R."/>
            <person name="Schmidt W."/>
            <person name="Lecharny A."/>
            <person name="Aubourg S."/>
            <person name="Chefdor F."/>
            <person name="Cooke R."/>
            <person name="Berger C."/>
            <person name="Monfort A."/>
            <person name="Casacuberta E."/>
            <person name="Gibbons T."/>
            <person name="Weber N."/>
            <person name="Vandenbol M."/>
            <person name="Bargues M."/>
            <person name="Terol J."/>
            <person name="Torres A."/>
            <person name="Perez-Perez A."/>
            <person name="Purnelle B."/>
            <person name="Bent E."/>
            <person name="Johnson S."/>
            <person name="Tacon D."/>
            <person name="Jesse T."/>
            <person name="Heijnen L."/>
            <person name="Schwarz S."/>
            <person name="Scholler P."/>
            <person name="Heber S."/>
            <person name="Francs P."/>
            <person name="Bielke C."/>
            <person name="Frishman D."/>
            <person name="Haase D."/>
            <person name="Lemcke K."/>
            <person name="Mewes H.-W."/>
            <person name="Stocker S."/>
            <person name="Zaccaria P."/>
            <person name="Bevan M."/>
            <person name="Wilson R.K."/>
            <person name="de la Bastide M."/>
            <person name="Habermann K."/>
            <person name="Parnell L."/>
            <person name="Dedhia N."/>
            <person name="Gnoj L."/>
            <person name="Schutz K."/>
            <person name="Huang E."/>
            <person name="Spiegel L."/>
            <person name="Sekhon M."/>
            <person name="Murray J."/>
            <person name="Sheet P."/>
            <person name="Cordes M."/>
            <person name="Abu-Threideh J."/>
            <person name="Stoneking T."/>
            <person name="Kalicki J."/>
            <person name="Graves T."/>
            <person name="Harmon G."/>
            <person name="Edwards J."/>
            <person name="Latreille P."/>
            <person name="Courtney L."/>
            <person name="Cloud J."/>
            <person name="Abbott A."/>
            <person name="Scott K."/>
            <person name="Johnson D."/>
            <person name="Minx P."/>
            <person name="Bentley D."/>
            <person name="Fulton B."/>
            <person name="Miller N."/>
            <person name="Greco T."/>
            <person name="Kemp K."/>
            <person name="Kramer J."/>
            <person name="Fulton L."/>
            <person name="Mardis E."/>
            <person name="Dante M."/>
            <person name="Pepin K."/>
            <person name="Hillier L.W."/>
            <person name="Nelson J."/>
            <person name="Spieth J."/>
            <person name="Ryan E."/>
            <person name="Andrews S."/>
            <person name="Geisel C."/>
            <person name="Layman D."/>
            <person name="Du H."/>
            <person name="Ali J."/>
            <person name="Berghoff A."/>
            <person name="Jones K."/>
            <person name="Drone K."/>
            <person name="Cotton M."/>
            <person name="Joshu C."/>
            <person name="Antonoiu B."/>
            <person name="Zidanic M."/>
            <person name="Strong C."/>
            <person name="Sun H."/>
            <person name="Lamar B."/>
            <person name="Yordan C."/>
            <person name="Ma P."/>
            <person name="Zhong J."/>
            <person name="Preston R."/>
            <person name="Vil D."/>
            <person name="Shekher M."/>
            <person name="Matero A."/>
            <person name="Shah R."/>
            <person name="Swaby I.K."/>
            <person name="O'Shaughnessy A."/>
            <person name="Rodriguez M."/>
            <person name="Hoffman J."/>
            <person name="Till S."/>
            <person name="Granat S."/>
            <person name="Shohdy N."/>
            <person name="Hasegawa A."/>
            <person name="Hameed A."/>
            <person name="Lodhi M."/>
            <person name="Johnson A."/>
            <person name="Chen E."/>
            <person name="Marra M.A."/>
            <person name="Martienssen R."/>
            <person name="McCombie W.R."/>
        </authorList>
    </citation>
    <scope>NUCLEOTIDE SEQUENCE [LARGE SCALE GENOMIC DNA]</scope>
    <source>
        <strain>cv. Columbia</strain>
    </source>
</reference>
<reference key="2">
    <citation type="journal article" date="2017" name="Plant J.">
        <title>Araport11: a complete reannotation of the Arabidopsis thaliana reference genome.</title>
        <authorList>
            <person name="Cheng C.Y."/>
            <person name="Krishnakumar V."/>
            <person name="Chan A.P."/>
            <person name="Thibaud-Nissen F."/>
            <person name="Schobel S."/>
            <person name="Town C.D."/>
        </authorList>
    </citation>
    <scope>GENOME REANNOTATION</scope>
    <source>
        <strain>cv. Columbia</strain>
    </source>
</reference>
<reference key="3">
    <citation type="journal article" date="2002" name="Science">
        <title>Functional annotation of a full-length Arabidopsis cDNA collection.</title>
        <authorList>
            <person name="Seki M."/>
            <person name="Narusaka M."/>
            <person name="Kamiya A."/>
            <person name="Ishida J."/>
            <person name="Satou M."/>
            <person name="Sakurai T."/>
            <person name="Nakajima M."/>
            <person name="Enju A."/>
            <person name="Akiyama K."/>
            <person name="Oono Y."/>
            <person name="Muramatsu M."/>
            <person name="Hayashizaki Y."/>
            <person name="Kawai J."/>
            <person name="Carninci P."/>
            <person name="Itoh M."/>
            <person name="Ishii Y."/>
            <person name="Arakawa T."/>
            <person name="Shibata K."/>
            <person name="Shinagawa A."/>
            <person name="Shinozaki K."/>
        </authorList>
    </citation>
    <scope>NUCLEOTIDE SEQUENCE [LARGE SCALE MRNA] (ISOFORM 2)</scope>
    <source>
        <strain>cv. Columbia</strain>
    </source>
</reference>
<reference key="4">
    <citation type="journal article" date="2003" name="Science">
        <title>Empirical analysis of transcriptional activity in the Arabidopsis genome.</title>
        <authorList>
            <person name="Yamada K."/>
            <person name="Lim J."/>
            <person name="Dale J.M."/>
            <person name="Chen H."/>
            <person name="Shinn P."/>
            <person name="Palm C.J."/>
            <person name="Southwick A.M."/>
            <person name="Wu H.C."/>
            <person name="Kim C.J."/>
            <person name="Nguyen M."/>
            <person name="Pham P.K."/>
            <person name="Cheuk R.F."/>
            <person name="Karlin-Newmann G."/>
            <person name="Liu S.X."/>
            <person name="Lam B."/>
            <person name="Sakano H."/>
            <person name="Wu T."/>
            <person name="Yu G."/>
            <person name="Miranda M."/>
            <person name="Quach H.L."/>
            <person name="Tripp M."/>
            <person name="Chang C.H."/>
            <person name="Lee J.M."/>
            <person name="Toriumi M.J."/>
            <person name="Chan M.M."/>
            <person name="Tang C.C."/>
            <person name="Onodera C.S."/>
            <person name="Deng J.M."/>
            <person name="Akiyama K."/>
            <person name="Ansari Y."/>
            <person name="Arakawa T."/>
            <person name="Banh J."/>
            <person name="Banno F."/>
            <person name="Bowser L."/>
            <person name="Brooks S.Y."/>
            <person name="Carninci P."/>
            <person name="Chao Q."/>
            <person name="Choy N."/>
            <person name="Enju A."/>
            <person name="Goldsmith A.D."/>
            <person name="Gurjal M."/>
            <person name="Hansen N.F."/>
            <person name="Hayashizaki Y."/>
            <person name="Johnson-Hopson C."/>
            <person name="Hsuan V.W."/>
            <person name="Iida K."/>
            <person name="Karnes M."/>
            <person name="Khan S."/>
            <person name="Koesema E."/>
            <person name="Ishida J."/>
            <person name="Jiang P.X."/>
            <person name="Jones T."/>
            <person name="Kawai J."/>
            <person name="Kamiya A."/>
            <person name="Meyers C."/>
            <person name="Nakajima M."/>
            <person name="Narusaka M."/>
            <person name="Seki M."/>
            <person name="Sakurai T."/>
            <person name="Satou M."/>
            <person name="Tamse R."/>
            <person name="Vaysberg M."/>
            <person name="Wallender E.K."/>
            <person name="Wong C."/>
            <person name="Yamamura Y."/>
            <person name="Yuan S."/>
            <person name="Shinozaki K."/>
            <person name="Davis R.W."/>
            <person name="Theologis A."/>
            <person name="Ecker J.R."/>
        </authorList>
    </citation>
    <scope>NUCLEOTIDE SEQUENCE [LARGE SCALE MRNA] (ISOFORM 1)</scope>
    <source>
        <strain>cv. Columbia</strain>
    </source>
</reference>
<reference key="5">
    <citation type="journal article" date="2003" name="Plant Mol. Biol.">
        <title>CHB2, a member of the SWI3 gene family, is a global regulator in Arabidopsis.</title>
        <authorList>
            <person name="Zhou C."/>
            <person name="Miki B."/>
            <person name="Wu K."/>
        </authorList>
    </citation>
    <scope>TISSUE SPECIFICITY</scope>
</reference>
<reference key="6">
    <citation type="journal article" date="2005" name="Plant Cell">
        <title>SWI3 subunits of putative SWI/SNF chromatin-remodeling complexes play distinct roles during Arabidopsis development.</title>
        <authorList>
            <person name="Sarnowski T.J."/>
            <person name="Rios G."/>
            <person name="Jasik J."/>
            <person name="Swiezewski S."/>
            <person name="Kaczanowski S."/>
            <person name="Li Y."/>
            <person name="Kwiatkowska A."/>
            <person name="Pawlikowska K."/>
            <person name="Kozbial M."/>
            <person name="Kozbial P."/>
            <person name="Koncz C."/>
            <person name="Jerzmanowski A."/>
        </authorList>
    </citation>
    <scope>DISRUPTION PHENOTYPE</scope>
    <scope>INTERACTION WITH SWI3B AND BSH</scope>
</reference>
<reference key="7">
    <citation type="journal article" date="2014" name="PLoS Genet.">
        <title>The SET domain proteins SUVH2 and SUVH9 are required for Pol V occupancy at RNA-directed DNA methylation loci.</title>
        <authorList>
            <person name="Liu Z.-W."/>
            <person name="Shao C.-R."/>
            <person name="Zhang C.-J."/>
            <person name="Zhou J.-X."/>
            <person name="Zhang S.-W."/>
            <person name="Li L."/>
            <person name="Chen S."/>
            <person name="Huang H.-W."/>
            <person name="Cai T."/>
            <person name="He X.-J."/>
        </authorList>
    </citation>
    <scope>SUBUNIT</scope>
</reference>
<reference key="8">
    <citation type="journal article" date="2016" name="PLoS Genet.">
        <title>Two components of the RNA-Directed DNA methylation pathway associate with MORC6 and silence loci targeted by MORC6 in Arabidopsis.</title>
        <authorList>
            <person name="Liu Z.-W."/>
            <person name="Zhou J.-X."/>
            <person name="Huang H.-W."/>
            <person name="Li Y.-Q."/>
            <person name="Shao C.-R."/>
            <person name="Li L."/>
            <person name="Cai T."/>
            <person name="Chen S."/>
            <person name="He X.-J."/>
        </authorList>
    </citation>
    <scope>INTERACTION WITH MORC6 AND SUVH9</scope>
</reference>